<keyword id="KW-0963">Cytoplasm</keyword>
<keyword id="KW-0648">Protein biosynthesis</keyword>
<sequence>MINEIRKDAEVRMEKCLEAFQNHISKIRTGRASPSILDGIQVEYYGTATPLRQLANIVVEDSRTLALTVFDRSLSAAVEKAIMTSDLGLNPSSAGTVIRVPLPALTEERRKDLIKVVRAEAEQGRVSIRNVRRDANDKVKALLKDKEISEDEDRRSQDDVQKLTDAYIKKVDAALAVKEAELMDF</sequence>
<reference key="1">
    <citation type="journal article" date="2010" name="J. Bacteriol.">
        <title>Genome sequence of the deep-rooted Yersinia pestis strain Angola reveals new insights into the evolution and pangenome of the plague bacterium.</title>
        <authorList>
            <person name="Eppinger M."/>
            <person name="Worsham P.L."/>
            <person name="Nikolich M.P."/>
            <person name="Riley D.R."/>
            <person name="Sebastian Y."/>
            <person name="Mou S."/>
            <person name="Achtman M."/>
            <person name="Lindler L.E."/>
            <person name="Ravel J."/>
        </authorList>
    </citation>
    <scope>NUCLEOTIDE SEQUENCE [LARGE SCALE GENOMIC DNA]</scope>
    <source>
        <strain>Angola</strain>
    </source>
</reference>
<gene>
    <name evidence="1" type="primary">frr</name>
    <name type="ordered locus">YpAngola_A3432</name>
</gene>
<organism>
    <name type="scientific">Yersinia pestis bv. Antiqua (strain Angola)</name>
    <dbReference type="NCBI Taxonomy" id="349746"/>
    <lineage>
        <taxon>Bacteria</taxon>
        <taxon>Pseudomonadati</taxon>
        <taxon>Pseudomonadota</taxon>
        <taxon>Gammaproteobacteria</taxon>
        <taxon>Enterobacterales</taxon>
        <taxon>Yersiniaceae</taxon>
        <taxon>Yersinia</taxon>
    </lineage>
</organism>
<evidence type="ECO:0000255" key="1">
    <source>
        <dbReference type="HAMAP-Rule" id="MF_00040"/>
    </source>
</evidence>
<proteinExistence type="inferred from homology"/>
<comment type="function">
    <text evidence="1">Responsible for the release of ribosomes from messenger RNA at the termination of protein biosynthesis. May increase the efficiency of translation by recycling ribosomes from one round of translation to another.</text>
</comment>
<comment type="subcellular location">
    <subcellularLocation>
        <location evidence="1">Cytoplasm</location>
    </subcellularLocation>
</comment>
<comment type="similarity">
    <text evidence="1">Belongs to the RRF family.</text>
</comment>
<feature type="chain" id="PRO_1000090807" description="Ribosome-recycling factor">
    <location>
        <begin position="1"/>
        <end position="185"/>
    </location>
</feature>
<accession>A9R393</accession>
<dbReference type="EMBL" id="CP000901">
    <property type="protein sequence ID" value="ABX86944.1"/>
    <property type="molecule type" value="Genomic_DNA"/>
</dbReference>
<dbReference type="RefSeq" id="WP_002212134.1">
    <property type="nucleotide sequence ID" value="NZ_CP009935.1"/>
</dbReference>
<dbReference type="SMR" id="A9R393"/>
<dbReference type="GeneID" id="57977514"/>
<dbReference type="KEGG" id="ypg:YpAngola_A3432"/>
<dbReference type="PATRIC" id="fig|349746.12.peg.127"/>
<dbReference type="GO" id="GO:0005829">
    <property type="term" value="C:cytosol"/>
    <property type="evidence" value="ECO:0007669"/>
    <property type="project" value="GOC"/>
</dbReference>
<dbReference type="GO" id="GO:0043023">
    <property type="term" value="F:ribosomal large subunit binding"/>
    <property type="evidence" value="ECO:0007669"/>
    <property type="project" value="TreeGrafter"/>
</dbReference>
<dbReference type="GO" id="GO:0002184">
    <property type="term" value="P:cytoplasmic translational termination"/>
    <property type="evidence" value="ECO:0007669"/>
    <property type="project" value="TreeGrafter"/>
</dbReference>
<dbReference type="CDD" id="cd00520">
    <property type="entry name" value="RRF"/>
    <property type="match status" value="1"/>
</dbReference>
<dbReference type="FunFam" id="1.10.132.20:FF:000001">
    <property type="entry name" value="Ribosome-recycling factor"/>
    <property type="match status" value="1"/>
</dbReference>
<dbReference type="FunFam" id="3.30.1360.40:FF:000001">
    <property type="entry name" value="Ribosome-recycling factor"/>
    <property type="match status" value="1"/>
</dbReference>
<dbReference type="Gene3D" id="3.30.1360.40">
    <property type="match status" value="1"/>
</dbReference>
<dbReference type="Gene3D" id="1.10.132.20">
    <property type="entry name" value="Ribosome-recycling factor"/>
    <property type="match status" value="1"/>
</dbReference>
<dbReference type="HAMAP" id="MF_00040">
    <property type="entry name" value="RRF"/>
    <property type="match status" value="1"/>
</dbReference>
<dbReference type="InterPro" id="IPR002661">
    <property type="entry name" value="Ribosome_recyc_fac"/>
</dbReference>
<dbReference type="InterPro" id="IPR023584">
    <property type="entry name" value="Ribosome_recyc_fac_dom"/>
</dbReference>
<dbReference type="InterPro" id="IPR036191">
    <property type="entry name" value="RRF_sf"/>
</dbReference>
<dbReference type="NCBIfam" id="TIGR00496">
    <property type="entry name" value="frr"/>
    <property type="match status" value="1"/>
</dbReference>
<dbReference type="PANTHER" id="PTHR20982:SF3">
    <property type="entry name" value="MITOCHONDRIAL RIBOSOME RECYCLING FACTOR PSEUDO 1"/>
    <property type="match status" value="1"/>
</dbReference>
<dbReference type="PANTHER" id="PTHR20982">
    <property type="entry name" value="RIBOSOME RECYCLING FACTOR"/>
    <property type="match status" value="1"/>
</dbReference>
<dbReference type="Pfam" id="PF01765">
    <property type="entry name" value="RRF"/>
    <property type="match status" value="1"/>
</dbReference>
<dbReference type="SUPFAM" id="SSF55194">
    <property type="entry name" value="Ribosome recycling factor, RRF"/>
    <property type="match status" value="1"/>
</dbReference>
<protein>
    <recommendedName>
        <fullName evidence="1">Ribosome-recycling factor</fullName>
        <shortName evidence="1">RRF</shortName>
    </recommendedName>
    <alternativeName>
        <fullName evidence="1">Ribosome-releasing factor</fullName>
    </alternativeName>
</protein>
<name>RRF_YERPG</name>